<name>MURB_BUCBP</name>
<comment type="function">
    <text evidence="1">Cell wall formation.</text>
</comment>
<comment type="catalytic activity">
    <reaction evidence="1">
        <text>UDP-N-acetyl-alpha-D-muramate + NADP(+) = UDP-N-acetyl-3-O-(1-carboxyvinyl)-alpha-D-glucosamine + NADPH + H(+)</text>
        <dbReference type="Rhea" id="RHEA:12248"/>
        <dbReference type="ChEBI" id="CHEBI:15378"/>
        <dbReference type="ChEBI" id="CHEBI:57783"/>
        <dbReference type="ChEBI" id="CHEBI:58349"/>
        <dbReference type="ChEBI" id="CHEBI:68483"/>
        <dbReference type="ChEBI" id="CHEBI:70757"/>
        <dbReference type="EC" id="1.3.1.98"/>
    </reaction>
</comment>
<comment type="cofactor">
    <cofactor evidence="1">
        <name>FAD</name>
        <dbReference type="ChEBI" id="CHEBI:57692"/>
    </cofactor>
</comment>
<comment type="pathway">
    <text evidence="1">Cell wall biogenesis; peptidoglycan biosynthesis.</text>
</comment>
<comment type="subcellular location">
    <subcellularLocation>
        <location evidence="1">Cytoplasm</location>
    </subcellularLocation>
</comment>
<comment type="similarity">
    <text evidence="1">Belongs to the MurB family.</text>
</comment>
<evidence type="ECO:0000255" key="1">
    <source>
        <dbReference type="HAMAP-Rule" id="MF_00037"/>
    </source>
</evidence>
<dbReference type="EC" id="1.3.1.98" evidence="1"/>
<dbReference type="EMBL" id="AE016826">
    <property type="protein sequence ID" value="AAO26785.1"/>
    <property type="molecule type" value="Genomic_DNA"/>
</dbReference>
<dbReference type="RefSeq" id="WP_011091186.1">
    <property type="nucleotide sequence ID" value="NC_004545.1"/>
</dbReference>
<dbReference type="SMR" id="P59450"/>
<dbReference type="STRING" id="224915.bbp_046"/>
<dbReference type="KEGG" id="bab:bbp_046"/>
<dbReference type="eggNOG" id="COG0812">
    <property type="taxonomic scope" value="Bacteria"/>
</dbReference>
<dbReference type="HOGENOM" id="CLU_035304_0_0_6"/>
<dbReference type="OrthoDB" id="9804753at2"/>
<dbReference type="UniPathway" id="UPA00219"/>
<dbReference type="Proteomes" id="UP000000601">
    <property type="component" value="Chromosome"/>
</dbReference>
<dbReference type="GO" id="GO:0005829">
    <property type="term" value="C:cytosol"/>
    <property type="evidence" value="ECO:0007669"/>
    <property type="project" value="TreeGrafter"/>
</dbReference>
<dbReference type="GO" id="GO:0071949">
    <property type="term" value="F:FAD binding"/>
    <property type="evidence" value="ECO:0007669"/>
    <property type="project" value="InterPro"/>
</dbReference>
<dbReference type="GO" id="GO:0008762">
    <property type="term" value="F:UDP-N-acetylmuramate dehydrogenase activity"/>
    <property type="evidence" value="ECO:0007669"/>
    <property type="project" value="UniProtKB-UniRule"/>
</dbReference>
<dbReference type="GO" id="GO:0051301">
    <property type="term" value="P:cell division"/>
    <property type="evidence" value="ECO:0007669"/>
    <property type="project" value="UniProtKB-KW"/>
</dbReference>
<dbReference type="GO" id="GO:0071555">
    <property type="term" value="P:cell wall organization"/>
    <property type="evidence" value="ECO:0007669"/>
    <property type="project" value="UniProtKB-KW"/>
</dbReference>
<dbReference type="GO" id="GO:0009252">
    <property type="term" value="P:peptidoglycan biosynthetic process"/>
    <property type="evidence" value="ECO:0007669"/>
    <property type="project" value="UniProtKB-UniRule"/>
</dbReference>
<dbReference type="GO" id="GO:0008360">
    <property type="term" value="P:regulation of cell shape"/>
    <property type="evidence" value="ECO:0007669"/>
    <property type="project" value="UniProtKB-KW"/>
</dbReference>
<dbReference type="Gene3D" id="3.30.465.10">
    <property type="match status" value="1"/>
</dbReference>
<dbReference type="Gene3D" id="3.90.78.10">
    <property type="entry name" value="UDP-N-acetylenolpyruvoylglucosamine reductase, C-terminal domain"/>
    <property type="match status" value="1"/>
</dbReference>
<dbReference type="Gene3D" id="3.30.43.10">
    <property type="entry name" value="Uridine Diphospho-n-acetylenolpyruvylglucosamine Reductase, domain 2"/>
    <property type="match status" value="1"/>
</dbReference>
<dbReference type="HAMAP" id="MF_00037">
    <property type="entry name" value="MurB"/>
    <property type="match status" value="1"/>
</dbReference>
<dbReference type="InterPro" id="IPR016166">
    <property type="entry name" value="FAD-bd_PCMH"/>
</dbReference>
<dbReference type="InterPro" id="IPR036318">
    <property type="entry name" value="FAD-bd_PCMH-like_sf"/>
</dbReference>
<dbReference type="InterPro" id="IPR016167">
    <property type="entry name" value="FAD-bd_PCMH_sub1"/>
</dbReference>
<dbReference type="InterPro" id="IPR016169">
    <property type="entry name" value="FAD-bd_PCMH_sub2"/>
</dbReference>
<dbReference type="InterPro" id="IPR003170">
    <property type="entry name" value="MurB"/>
</dbReference>
<dbReference type="InterPro" id="IPR011601">
    <property type="entry name" value="MurB_C"/>
</dbReference>
<dbReference type="InterPro" id="IPR036635">
    <property type="entry name" value="MurB_C_sf"/>
</dbReference>
<dbReference type="InterPro" id="IPR006094">
    <property type="entry name" value="Oxid_FAD_bind_N"/>
</dbReference>
<dbReference type="NCBIfam" id="TIGR00179">
    <property type="entry name" value="murB"/>
    <property type="match status" value="1"/>
</dbReference>
<dbReference type="NCBIfam" id="NF000755">
    <property type="entry name" value="PRK00046.1"/>
    <property type="match status" value="1"/>
</dbReference>
<dbReference type="PANTHER" id="PTHR21071">
    <property type="entry name" value="UDP-N-ACETYLENOLPYRUVOYLGLUCOSAMINE REDUCTASE"/>
    <property type="match status" value="1"/>
</dbReference>
<dbReference type="PANTHER" id="PTHR21071:SF4">
    <property type="entry name" value="UDP-N-ACETYLENOLPYRUVOYLGLUCOSAMINE REDUCTASE"/>
    <property type="match status" value="1"/>
</dbReference>
<dbReference type="Pfam" id="PF01565">
    <property type="entry name" value="FAD_binding_4"/>
    <property type="match status" value="1"/>
</dbReference>
<dbReference type="Pfam" id="PF02873">
    <property type="entry name" value="MurB_C"/>
    <property type="match status" value="1"/>
</dbReference>
<dbReference type="SUPFAM" id="SSF56176">
    <property type="entry name" value="FAD-binding/transporter-associated domain-like"/>
    <property type="match status" value="1"/>
</dbReference>
<dbReference type="SUPFAM" id="SSF56194">
    <property type="entry name" value="Uridine diphospho-N-Acetylenolpyruvylglucosamine reductase, MurB, C-terminal domain"/>
    <property type="match status" value="1"/>
</dbReference>
<dbReference type="PROSITE" id="PS51387">
    <property type="entry name" value="FAD_PCMH"/>
    <property type="match status" value="1"/>
</dbReference>
<reference key="1">
    <citation type="journal article" date="2003" name="Proc. Natl. Acad. Sci. U.S.A.">
        <title>Reductive genome evolution in Buchnera aphidicola.</title>
        <authorList>
            <person name="van Ham R.C.H.J."/>
            <person name="Kamerbeek J."/>
            <person name="Palacios C."/>
            <person name="Rausell C."/>
            <person name="Abascal F."/>
            <person name="Bastolla U."/>
            <person name="Fernandez J.M."/>
            <person name="Jimenez L."/>
            <person name="Postigo M."/>
            <person name="Silva F.J."/>
            <person name="Tamames J."/>
            <person name="Viguera E."/>
            <person name="Latorre A."/>
            <person name="Valencia A."/>
            <person name="Moran F."/>
            <person name="Moya A."/>
        </authorList>
    </citation>
    <scope>NUCLEOTIDE SEQUENCE [LARGE SCALE GENOMIC DNA]</scope>
    <source>
        <strain>Bp</strain>
    </source>
</reference>
<feature type="chain" id="PRO_0000179189" description="UDP-N-acetylenolpyruvoylglucosamine reductase">
    <location>
        <begin position="1"/>
        <end position="334"/>
    </location>
</feature>
<feature type="domain" description="FAD-binding PCMH-type" evidence="1">
    <location>
        <begin position="16"/>
        <end position="186"/>
    </location>
</feature>
<feature type="active site" evidence="1">
    <location>
        <position position="162"/>
    </location>
</feature>
<feature type="active site" description="Proton donor" evidence="1">
    <location>
        <position position="232"/>
    </location>
</feature>
<feature type="active site" evidence="1">
    <location>
        <position position="329"/>
    </location>
</feature>
<sequence length="334" mass="38428">MKTYYTSLKKFHTFKINVFAKKIIIVKTIKTLIKTWKKCNQENLPFLLLGKGSNVLFTKNYNGFVVVNRISGITIHEQKDYWLLHVKGGTKWNNLVKYTIQKKIYGLENLALIPGTVGAAPIQNIGAYGVEFKDVCQYVDVLYLNNSKIVRINSNNCLFGYRDSIFKKKHNPNSIILSVGIKLPKTWKPKISHLELQKLSFKNITSHQIFHYICKLRKKKLPNPKKIGNAGSFFKNPIIKKNKAHKIICEYKDLPFYPEPHGMIKLSAGWLIEKCKLKNFSVGNAKIYHKQALILINKNNLATSKNIIKLAKIIISKVKKKFDITLELEVQIIN</sequence>
<accession>P59450</accession>
<organism>
    <name type="scientific">Buchnera aphidicola subsp. Baizongia pistaciae (strain Bp)</name>
    <dbReference type="NCBI Taxonomy" id="224915"/>
    <lineage>
        <taxon>Bacteria</taxon>
        <taxon>Pseudomonadati</taxon>
        <taxon>Pseudomonadota</taxon>
        <taxon>Gammaproteobacteria</taxon>
        <taxon>Enterobacterales</taxon>
        <taxon>Erwiniaceae</taxon>
        <taxon>Buchnera</taxon>
    </lineage>
</organism>
<protein>
    <recommendedName>
        <fullName evidence="1">UDP-N-acetylenolpyruvoylglucosamine reductase</fullName>
        <ecNumber evidence="1">1.3.1.98</ecNumber>
    </recommendedName>
    <alternativeName>
        <fullName evidence="1">UDP-N-acetylmuramate dehydrogenase</fullName>
    </alternativeName>
</protein>
<proteinExistence type="inferred from homology"/>
<keyword id="KW-0131">Cell cycle</keyword>
<keyword id="KW-0132">Cell division</keyword>
<keyword id="KW-0133">Cell shape</keyword>
<keyword id="KW-0961">Cell wall biogenesis/degradation</keyword>
<keyword id="KW-0963">Cytoplasm</keyword>
<keyword id="KW-0274">FAD</keyword>
<keyword id="KW-0285">Flavoprotein</keyword>
<keyword id="KW-0521">NADP</keyword>
<keyword id="KW-0560">Oxidoreductase</keyword>
<keyword id="KW-0573">Peptidoglycan synthesis</keyword>
<keyword id="KW-1185">Reference proteome</keyword>
<gene>
    <name evidence="1" type="primary">murB</name>
    <name type="ordered locus">bbp_046</name>
</gene>